<gene>
    <name type="primary">GIG1</name>
    <name type="synonym">EBO30</name>
    <name type="synonym">OSD1</name>
    <name type="synonym">UVI4-LIKE</name>
    <name type="ordered locus">At3g57860</name>
    <name type="ORF">T10K17.70</name>
</gene>
<evidence type="ECO:0000269" key="1">
    <source>
    </source>
</evidence>
<evidence type="ECO:0000269" key="2">
    <source>
    </source>
</evidence>
<evidence type="ECO:0000269" key="3">
    <source>
    </source>
</evidence>
<evidence type="ECO:0000269" key="4">
    <source>
    </source>
</evidence>
<evidence type="ECO:0000269" key="5">
    <source>
    </source>
</evidence>
<evidence type="ECO:0000269" key="6">
    <source>
    </source>
</evidence>
<evidence type="ECO:0000269" key="7">
    <source>
    </source>
</evidence>
<feature type="chain" id="PRO_0000423304" description="Protein GIGAS CELL1">
    <location>
        <begin position="1"/>
        <end position="243"/>
    </location>
</feature>
<name>GIG1_ARATH</name>
<protein>
    <recommendedName>
        <fullName>Protein GIGAS CELL1</fullName>
    </recommendedName>
    <alternativeName>
        <fullName>Protein ENHANCER OF BON1-2 30</fullName>
    </alternativeName>
    <alternativeName>
        <fullName>Protein OMISSION OF SECOND DIVISION1</fullName>
    </alternativeName>
    <alternativeName>
        <fullName>Protein UV-B-INSENSITIVE 4-like</fullName>
    </alternativeName>
</protein>
<keyword id="KW-0131">Cell cycle</keyword>
<keyword id="KW-0132">Cell division</keyword>
<keyword id="KW-0217">Developmental protein</keyword>
<keyword id="KW-0235">DNA replication</keyword>
<keyword id="KW-0469">Meiosis</keyword>
<keyword id="KW-0498">Mitosis</keyword>
<keyword id="KW-0597">Phosphoprotein</keyword>
<keyword id="KW-0611">Plant defense</keyword>
<keyword id="KW-1185">Reference proteome</keyword>
<organism>
    <name type="scientific">Arabidopsis thaliana</name>
    <name type="common">Mouse-ear cress</name>
    <dbReference type="NCBI Taxonomy" id="3702"/>
    <lineage>
        <taxon>Eukaryota</taxon>
        <taxon>Viridiplantae</taxon>
        <taxon>Streptophyta</taxon>
        <taxon>Embryophyta</taxon>
        <taxon>Tracheophyta</taxon>
        <taxon>Spermatophyta</taxon>
        <taxon>Magnoliopsida</taxon>
        <taxon>eudicotyledons</taxon>
        <taxon>Gunneridae</taxon>
        <taxon>Pentapetalae</taxon>
        <taxon>rosids</taxon>
        <taxon>malvids</taxon>
        <taxon>Brassicales</taxon>
        <taxon>Brassicaceae</taxon>
        <taxon>Camelineae</taxon>
        <taxon>Arabidopsis</taxon>
    </lineage>
</organism>
<proteinExistence type="evidence at protein level"/>
<dbReference type="EMBL" id="AL132977">
    <property type="protein sequence ID" value="CAB67614.1"/>
    <property type="molecule type" value="Genomic_DNA"/>
</dbReference>
<dbReference type="EMBL" id="CP002686">
    <property type="protein sequence ID" value="AEE79710.1"/>
    <property type="molecule type" value="Genomic_DNA"/>
</dbReference>
<dbReference type="EMBL" id="BT004275">
    <property type="protein sequence ID" value="AAO42276.1"/>
    <property type="molecule type" value="mRNA"/>
</dbReference>
<dbReference type="EMBL" id="BT005570">
    <property type="protein sequence ID" value="AAO63990.1"/>
    <property type="molecule type" value="mRNA"/>
</dbReference>
<dbReference type="PIR" id="T46008">
    <property type="entry name" value="T46008"/>
</dbReference>
<dbReference type="RefSeq" id="NP_191345.1">
    <property type="nucleotide sequence ID" value="NM_115648.5"/>
</dbReference>
<dbReference type="SMR" id="Q9M2R1"/>
<dbReference type="BioGRID" id="10270">
    <property type="interactions" value="16"/>
</dbReference>
<dbReference type="ELM" id="Q9M2R1"/>
<dbReference type="FunCoup" id="Q9M2R1">
    <property type="interactions" value="342"/>
</dbReference>
<dbReference type="IntAct" id="Q9M2R1">
    <property type="interactions" value="15"/>
</dbReference>
<dbReference type="STRING" id="3702.Q9M2R1"/>
<dbReference type="GlyGen" id="Q9M2R1">
    <property type="glycosylation" value="1 site"/>
</dbReference>
<dbReference type="PaxDb" id="3702-AT3G57860.1"/>
<dbReference type="ProteomicsDB" id="221892"/>
<dbReference type="EnsemblPlants" id="AT3G57860.1">
    <property type="protein sequence ID" value="AT3G57860.1"/>
    <property type="gene ID" value="AT3G57860"/>
</dbReference>
<dbReference type="GeneID" id="824955"/>
<dbReference type="Gramene" id="AT3G57860.1">
    <property type="protein sequence ID" value="AT3G57860.1"/>
    <property type="gene ID" value="AT3G57860"/>
</dbReference>
<dbReference type="KEGG" id="ath:AT3G57860"/>
<dbReference type="Araport" id="AT3G57860"/>
<dbReference type="TAIR" id="AT3G57860">
    <property type="gene designation" value="UVI4-LIKE"/>
</dbReference>
<dbReference type="eggNOG" id="ENOG502RZ6Y">
    <property type="taxonomic scope" value="Eukaryota"/>
</dbReference>
<dbReference type="HOGENOM" id="CLU_078386_0_0_1"/>
<dbReference type="InParanoid" id="Q9M2R1"/>
<dbReference type="OMA" id="EIPTHQQ"/>
<dbReference type="PhylomeDB" id="Q9M2R1"/>
<dbReference type="PRO" id="PR:Q9M2R1"/>
<dbReference type="Proteomes" id="UP000006548">
    <property type="component" value="Chromosome 3"/>
</dbReference>
<dbReference type="ExpressionAtlas" id="Q9M2R1">
    <property type="expression patterns" value="baseline and differential"/>
</dbReference>
<dbReference type="GO" id="GO:0005634">
    <property type="term" value="C:nucleus"/>
    <property type="evidence" value="ECO:0000314"/>
    <property type="project" value="TAIR"/>
</dbReference>
<dbReference type="GO" id="GO:0051301">
    <property type="term" value="P:cell division"/>
    <property type="evidence" value="ECO:0007669"/>
    <property type="project" value="UniProtKB-KW"/>
</dbReference>
<dbReference type="GO" id="GO:0006952">
    <property type="term" value="P:defense response"/>
    <property type="evidence" value="ECO:0007669"/>
    <property type="project" value="UniProtKB-KW"/>
</dbReference>
<dbReference type="GO" id="GO:0006260">
    <property type="term" value="P:DNA replication"/>
    <property type="evidence" value="ECO:0007669"/>
    <property type="project" value="UniProtKB-KW"/>
</dbReference>
<dbReference type="GO" id="GO:0007113">
    <property type="term" value="P:endomitotic cell cycle"/>
    <property type="evidence" value="ECO:0000315"/>
    <property type="project" value="TAIR"/>
</dbReference>
<dbReference type="GO" id="GO:0009960">
    <property type="term" value="P:endosperm development"/>
    <property type="evidence" value="ECO:0000315"/>
    <property type="project" value="UniProtKB"/>
</dbReference>
<dbReference type="GO" id="GO:0009561">
    <property type="term" value="P:megagametogenesis"/>
    <property type="evidence" value="ECO:0000315"/>
    <property type="project" value="UniProtKB"/>
</dbReference>
<dbReference type="GO" id="GO:0007127">
    <property type="term" value="P:meiosis I"/>
    <property type="evidence" value="ECO:0000315"/>
    <property type="project" value="UniProtKB"/>
</dbReference>
<dbReference type="GO" id="GO:0007135">
    <property type="term" value="P:meiosis II"/>
    <property type="evidence" value="ECO:0000315"/>
    <property type="project" value="UniProtKB"/>
</dbReference>
<dbReference type="GO" id="GO:1904667">
    <property type="term" value="P:negative regulation of ubiquitin protein ligase activity"/>
    <property type="evidence" value="ECO:0000315"/>
    <property type="project" value="UniProtKB"/>
</dbReference>
<dbReference type="GO" id="GO:1900426">
    <property type="term" value="P:positive regulation of defense response to bacterium"/>
    <property type="evidence" value="ECO:0000315"/>
    <property type="project" value="UniProtKB"/>
</dbReference>
<dbReference type="GO" id="GO:0040020">
    <property type="term" value="P:regulation of meiotic nuclear division"/>
    <property type="evidence" value="ECO:0000315"/>
    <property type="project" value="TAIR"/>
</dbReference>
<dbReference type="GO" id="GO:0007088">
    <property type="term" value="P:regulation of mitotic nuclear division"/>
    <property type="evidence" value="ECO:0000315"/>
    <property type="project" value="TAIR"/>
</dbReference>
<dbReference type="InterPro" id="IPR034590">
    <property type="entry name" value="POLYCHOME/GIG1"/>
</dbReference>
<dbReference type="PANTHER" id="PTHR35119:SF13">
    <property type="entry name" value="PROTEIN GIGAS CELL1"/>
    <property type="match status" value="1"/>
</dbReference>
<dbReference type="PANTHER" id="PTHR35119">
    <property type="entry name" value="PROTEIN POLYCHOME"/>
    <property type="match status" value="1"/>
</dbReference>
<comment type="function">
    <text evidence="2 3 4 5 6 7">Negative regulator of the anaphase-promoting complex/cyclosome (APC/C) ubiquitin ligase required for proper mitotic and meiotic progression and cell fate determination. Involved in entry into both meiosis I and meiosis II. Prevents endomitosis by preferentially inhibiting APC/C(CDC20). Required for megagametophyte and endosperm development. Triggers mitotic cyclins (e.g. CYCB1-1 and CYCB1-2) accumulation. Confers immunity to bacterial pathogens (e.g. Pseudomonas syringae pv. tomato DC3000), which is associated with increased expression of disease resistance (R) genes. GIG1 and PANS1 are part of a network linking centromere cohesion and cell cycle progression through control of APC/C activity.</text>
</comment>
<comment type="subunit">
    <text evidence="3 4">Interacts with APC/C activators such as FZR1, FZR2, FZR3, CDC20.1 and CDC20.5.</text>
</comment>
<comment type="tissue specificity">
    <text evidence="3">Expressed in rapidly dividing tissues such as shoot apical meristem and young leaves. Associated with cell division but also with specific cell types.</text>
</comment>
<comment type="developmental stage">
    <text evidence="1 3">Levels fade progressively in a basipetal fashion as the leaf develops. In the epidermis of cotyledons and leaves, observed in dividing and recently divided stomatal precursor cells, especially in dividing guard mother cells and young guard cells. Also present in asymmetrically dividing meristemoid mother cells and meristemoids. In roots, expressed preferentially in the division zones of root tips.</text>
</comment>
<comment type="PTM">
    <text evidence="4">Phosphorylated by CDKA-1 in complex with CYCA1-2.</text>
</comment>
<comment type="disruption phenotype">
    <text evidence="2 3 4 5 6">Ectopic endomitosis during somatic cell division leading to gigas cells, large guard cells, and round cells containing large polyploid nuclei in cotyledons. Enhancer of the myb3r4 mutant phenotype. Enhancer of bon1-2 phenotype, leading to dwarf and bushy phenotype with many lateral shoots. Production of diploid gametes by skipping the second meiotic division; male meiosis leads to dyads instead of tetrads, and selfed progeny provides tetraploids (4n) and triploids (3n), but no diploid (2n) plants.</text>
</comment>
<reference key="1">
    <citation type="journal article" date="2000" name="Nature">
        <title>Sequence and analysis of chromosome 3 of the plant Arabidopsis thaliana.</title>
        <authorList>
            <person name="Salanoubat M."/>
            <person name="Lemcke K."/>
            <person name="Rieger M."/>
            <person name="Ansorge W."/>
            <person name="Unseld M."/>
            <person name="Fartmann B."/>
            <person name="Valle G."/>
            <person name="Bloecker H."/>
            <person name="Perez-Alonso M."/>
            <person name="Obermaier B."/>
            <person name="Delseny M."/>
            <person name="Boutry M."/>
            <person name="Grivell L.A."/>
            <person name="Mache R."/>
            <person name="Puigdomenech P."/>
            <person name="De Simone V."/>
            <person name="Choisne N."/>
            <person name="Artiguenave F."/>
            <person name="Robert C."/>
            <person name="Brottier P."/>
            <person name="Wincker P."/>
            <person name="Cattolico L."/>
            <person name="Weissenbach J."/>
            <person name="Saurin W."/>
            <person name="Quetier F."/>
            <person name="Schaefer M."/>
            <person name="Mueller-Auer S."/>
            <person name="Gabel C."/>
            <person name="Fuchs M."/>
            <person name="Benes V."/>
            <person name="Wurmbach E."/>
            <person name="Drzonek H."/>
            <person name="Erfle H."/>
            <person name="Jordan N."/>
            <person name="Bangert S."/>
            <person name="Wiedelmann R."/>
            <person name="Kranz H."/>
            <person name="Voss H."/>
            <person name="Holland R."/>
            <person name="Brandt P."/>
            <person name="Nyakatura G."/>
            <person name="Vezzi A."/>
            <person name="D'Angelo M."/>
            <person name="Pallavicini A."/>
            <person name="Toppo S."/>
            <person name="Simionati B."/>
            <person name="Conrad A."/>
            <person name="Hornischer K."/>
            <person name="Kauer G."/>
            <person name="Loehnert T.-H."/>
            <person name="Nordsiek G."/>
            <person name="Reichelt J."/>
            <person name="Scharfe M."/>
            <person name="Schoen O."/>
            <person name="Bargues M."/>
            <person name="Terol J."/>
            <person name="Climent J."/>
            <person name="Navarro P."/>
            <person name="Collado C."/>
            <person name="Perez-Perez A."/>
            <person name="Ottenwaelder B."/>
            <person name="Duchemin D."/>
            <person name="Cooke R."/>
            <person name="Laudie M."/>
            <person name="Berger-Llauro C."/>
            <person name="Purnelle B."/>
            <person name="Masuy D."/>
            <person name="de Haan M."/>
            <person name="Maarse A.C."/>
            <person name="Alcaraz J.-P."/>
            <person name="Cottet A."/>
            <person name="Casacuberta E."/>
            <person name="Monfort A."/>
            <person name="Argiriou A."/>
            <person name="Flores M."/>
            <person name="Liguori R."/>
            <person name="Vitale D."/>
            <person name="Mannhaupt G."/>
            <person name="Haase D."/>
            <person name="Schoof H."/>
            <person name="Rudd S."/>
            <person name="Zaccaria P."/>
            <person name="Mewes H.-W."/>
            <person name="Mayer K.F.X."/>
            <person name="Kaul S."/>
            <person name="Town C.D."/>
            <person name="Koo H.L."/>
            <person name="Tallon L.J."/>
            <person name="Jenkins J."/>
            <person name="Rooney T."/>
            <person name="Rizzo M."/>
            <person name="Walts A."/>
            <person name="Utterback T."/>
            <person name="Fujii C.Y."/>
            <person name="Shea T.P."/>
            <person name="Creasy T.H."/>
            <person name="Haas B."/>
            <person name="Maiti R."/>
            <person name="Wu D."/>
            <person name="Peterson J."/>
            <person name="Van Aken S."/>
            <person name="Pai G."/>
            <person name="Militscher J."/>
            <person name="Sellers P."/>
            <person name="Gill J.E."/>
            <person name="Feldblyum T.V."/>
            <person name="Preuss D."/>
            <person name="Lin X."/>
            <person name="Nierman W.C."/>
            <person name="Salzberg S.L."/>
            <person name="White O."/>
            <person name="Venter J.C."/>
            <person name="Fraser C.M."/>
            <person name="Kaneko T."/>
            <person name="Nakamura Y."/>
            <person name="Sato S."/>
            <person name="Kato T."/>
            <person name="Asamizu E."/>
            <person name="Sasamoto S."/>
            <person name="Kimura T."/>
            <person name="Idesawa K."/>
            <person name="Kawashima K."/>
            <person name="Kishida Y."/>
            <person name="Kiyokawa C."/>
            <person name="Kohara M."/>
            <person name="Matsumoto M."/>
            <person name="Matsuno A."/>
            <person name="Muraki A."/>
            <person name="Nakayama S."/>
            <person name="Nakazaki N."/>
            <person name="Shinpo S."/>
            <person name="Takeuchi C."/>
            <person name="Wada T."/>
            <person name="Watanabe A."/>
            <person name="Yamada M."/>
            <person name="Yasuda M."/>
            <person name="Tabata S."/>
        </authorList>
    </citation>
    <scope>NUCLEOTIDE SEQUENCE [LARGE SCALE GENOMIC DNA]</scope>
    <source>
        <strain>cv. Columbia</strain>
    </source>
</reference>
<reference key="2">
    <citation type="journal article" date="2017" name="Plant J.">
        <title>Araport11: a complete reannotation of the Arabidopsis thaliana reference genome.</title>
        <authorList>
            <person name="Cheng C.Y."/>
            <person name="Krishnakumar V."/>
            <person name="Chan A.P."/>
            <person name="Thibaud-Nissen F."/>
            <person name="Schobel S."/>
            <person name="Town C.D."/>
        </authorList>
    </citation>
    <scope>GENOME REANNOTATION</scope>
    <source>
        <strain>cv. Columbia</strain>
    </source>
</reference>
<reference key="3">
    <citation type="journal article" date="2003" name="Science">
        <title>Empirical analysis of transcriptional activity in the Arabidopsis genome.</title>
        <authorList>
            <person name="Yamada K."/>
            <person name="Lim J."/>
            <person name="Dale J.M."/>
            <person name="Chen H."/>
            <person name="Shinn P."/>
            <person name="Palm C.J."/>
            <person name="Southwick A.M."/>
            <person name="Wu H.C."/>
            <person name="Kim C.J."/>
            <person name="Nguyen M."/>
            <person name="Pham P.K."/>
            <person name="Cheuk R.F."/>
            <person name="Karlin-Newmann G."/>
            <person name="Liu S.X."/>
            <person name="Lam B."/>
            <person name="Sakano H."/>
            <person name="Wu T."/>
            <person name="Yu G."/>
            <person name="Miranda M."/>
            <person name="Quach H.L."/>
            <person name="Tripp M."/>
            <person name="Chang C.H."/>
            <person name="Lee J.M."/>
            <person name="Toriumi M.J."/>
            <person name="Chan M.M."/>
            <person name="Tang C.C."/>
            <person name="Onodera C.S."/>
            <person name="Deng J.M."/>
            <person name="Akiyama K."/>
            <person name="Ansari Y."/>
            <person name="Arakawa T."/>
            <person name="Banh J."/>
            <person name="Banno F."/>
            <person name="Bowser L."/>
            <person name="Brooks S.Y."/>
            <person name="Carninci P."/>
            <person name="Chao Q."/>
            <person name="Choy N."/>
            <person name="Enju A."/>
            <person name="Goldsmith A.D."/>
            <person name="Gurjal M."/>
            <person name="Hansen N.F."/>
            <person name="Hayashizaki Y."/>
            <person name="Johnson-Hopson C."/>
            <person name="Hsuan V.W."/>
            <person name="Iida K."/>
            <person name="Karnes M."/>
            <person name="Khan S."/>
            <person name="Koesema E."/>
            <person name="Ishida J."/>
            <person name="Jiang P.X."/>
            <person name="Jones T."/>
            <person name="Kawai J."/>
            <person name="Kamiya A."/>
            <person name="Meyers C."/>
            <person name="Nakajima M."/>
            <person name="Narusaka M."/>
            <person name="Seki M."/>
            <person name="Sakurai T."/>
            <person name="Satou M."/>
            <person name="Tamse R."/>
            <person name="Vaysberg M."/>
            <person name="Wallender E.K."/>
            <person name="Wong C."/>
            <person name="Yamamura Y."/>
            <person name="Yuan S."/>
            <person name="Shinozaki K."/>
            <person name="Davis R.W."/>
            <person name="Theologis A."/>
            <person name="Ecker J.R."/>
        </authorList>
    </citation>
    <scope>NUCLEOTIDE SEQUENCE [LARGE SCALE MRNA]</scope>
    <source>
        <strain>cv. Columbia</strain>
    </source>
</reference>
<reference key="4">
    <citation type="journal article" date="2006" name="Plant J.">
        <title>A mutation in the uvi4 gene promotes progression of endo-reduplication and confers increased tolerance towards ultraviolet B light.</title>
        <authorList>
            <person name="Hase Y."/>
            <person name="Trung K.H."/>
            <person name="Matsunaga T."/>
            <person name="Tanaka A."/>
        </authorList>
    </citation>
    <scope>DEVELOPMENTAL STAGE</scope>
</reference>
<reference key="5">
    <citation type="journal article" date="2009" name="PLoS Biol.">
        <title>Turning meiosis into mitosis.</title>
        <authorList>
            <person name="d'Erfurth I."/>
            <person name="Jolivet S."/>
            <person name="Froger N."/>
            <person name="Catrice O."/>
            <person name="Novatchkova M."/>
            <person name="Mercier R."/>
        </authorList>
    </citation>
    <scope>FUNCTION</scope>
    <scope>DISRUPTION PHENOTYPE</scope>
</reference>
<reference key="6">
    <citation type="journal article" date="2011" name="Plant Cell">
        <title>GIGAS CELL1, a novel negative regulator of the anaphase-promoting complex/cyclosome, is required for proper mitotic progression and cell fate determination in Arabidopsis.</title>
        <authorList>
            <person name="Iwata E."/>
            <person name="Ikeda S."/>
            <person name="Matsunaga S."/>
            <person name="Kurata M."/>
            <person name="Yoshioka Y."/>
            <person name="Criqui M.-C."/>
            <person name="Genschik P."/>
            <person name="Ito M."/>
        </authorList>
    </citation>
    <scope>FUNCTION</scope>
    <scope>DISRUPTION PHENOTYPE</scope>
    <scope>INTERACTION WITH FZR2; FZR3; CDC20.1 AND CDC20.5</scope>
    <scope>TISSUE SPECIFICITY</scope>
    <scope>DEVELOPMENTAL STAGE</scope>
</reference>
<reference key="7">
    <citation type="journal article" date="2012" name="Plant Signal. Behav.">
        <title>Roles of GIG1 and UVI4 in genome duplication in Arabidopsis thaliana.</title>
        <authorList>
            <person name="Iwata E."/>
            <person name="Ikeda S."/>
            <person name="Abe N."/>
            <person name="Kobayashi A."/>
            <person name="Kurata M."/>
            <person name="Matsunaga S."/>
            <person name="Yoshioka Y."/>
            <person name="Criqui M.C."/>
            <person name="Genschik P."/>
            <person name="Ito M."/>
        </authorList>
    </citation>
    <scope>FUNCTION</scope>
    <scope>DISRUPTION PHENOTYPE</scope>
</reference>
<reference key="8">
    <citation type="journal article" date="2012" name="PLoS Genet.">
        <title>OSD1 promotes meiotic progression via APC/C inhibition and forms a regulatory network with TDM and CYCA1;2/TAM.</title>
        <authorList>
            <person name="Cromer L."/>
            <person name="Heyman J."/>
            <person name="Touati S."/>
            <person name="Harashima H."/>
            <person name="Araou E."/>
            <person name="Girard C."/>
            <person name="Horlow C."/>
            <person name="Wassmann K."/>
            <person name="Schnittger A."/>
            <person name="De Veylder L."/>
            <person name="Mercier R."/>
        </authorList>
    </citation>
    <scope>FUNCTION</scope>
    <scope>DISRUPTION PHENOTYPE</scope>
    <scope>PHOSPHORYLATION BY CDKA-1</scope>
    <scope>INTERACTION WITH FZR1; FZR2; FZR3 AND CDC20.1</scope>
</reference>
<reference key="9">
    <citation type="journal article" date="2013" name="Proc. Natl. Acad. Sci. U.S.A.">
        <title>Perturbation of cell cycle regulation triggers plant immune response via activation of disease resistance genes.</title>
        <authorList>
            <person name="Bao Z."/>
            <person name="Yang H."/>
            <person name="Hua J."/>
        </authorList>
    </citation>
    <scope>FUNCTION</scope>
    <scope>DISRUPTION PHENOTYPE</scope>
    <source>
        <strain>cv. Columbia</strain>
    </source>
</reference>
<reference key="10">
    <citation type="journal article" date="2015" name="BMC Plant Biol.">
        <title>PATRONUS1 is expressed in meiotic prophase I to regulate centromeric cohesion in Arabidopsis and shows synthetic lethality with OSD1.</title>
        <authorList>
            <person name="Singh D.K."/>
            <person name="Spillane C."/>
            <person name="Siddiqi I."/>
        </authorList>
    </citation>
    <scope>FUNCTION</scope>
</reference>
<sequence>MPEARDRTERPVDYSTIFANRRRHGILLDEPDSRLSLIESPVNPDIGSIGGTGGLVRGNFTTWRPGNGRGGHTPFRLPQGRENMPIVTARRGRGGGLLPSWYPRTPLRDITHIVRAIERRRGAGTGGDDGRVIEIPTHRQVGVLESPVPLSGEHKCSMVTPGPSVGFKRSCPPSTAKVQKMLLDITKEIAEEEAGFITPEKKLLNSIDKVEKIVMAEIQKLKSTPQAKREEREKRVRTLMTMR</sequence>
<accession>Q9M2R1</accession>